<name>FKBP6_RAT</name>
<organism>
    <name type="scientific">Rattus norvegicus</name>
    <name type="common">Rat</name>
    <dbReference type="NCBI Taxonomy" id="10116"/>
    <lineage>
        <taxon>Eukaryota</taxon>
        <taxon>Metazoa</taxon>
        <taxon>Chordata</taxon>
        <taxon>Craniata</taxon>
        <taxon>Vertebrata</taxon>
        <taxon>Euteleostomi</taxon>
        <taxon>Mammalia</taxon>
        <taxon>Eutheria</taxon>
        <taxon>Euarchontoglires</taxon>
        <taxon>Glires</taxon>
        <taxon>Rodentia</taxon>
        <taxon>Myomorpha</taxon>
        <taxon>Muroidea</taxon>
        <taxon>Muridae</taxon>
        <taxon>Murinae</taxon>
        <taxon>Rattus</taxon>
    </lineage>
</organism>
<proteinExistence type="inferred from homology"/>
<evidence type="ECO:0000250" key="1"/>
<evidence type="ECO:0000255" key="2">
    <source>
        <dbReference type="PROSITE-ProRule" id="PRU00277"/>
    </source>
</evidence>
<evidence type="ECO:0000256" key="3">
    <source>
        <dbReference type="SAM" id="MobiDB-lite"/>
    </source>
</evidence>
<evidence type="ECO:0000269" key="4">
    <source>
    </source>
</evidence>
<evidence type="ECO:0000305" key="5"/>
<protein>
    <recommendedName>
        <fullName>Inactive peptidyl-prolyl cis-trans isomerase FKBP6</fullName>
        <shortName>Inactive PPIase FKBP6</shortName>
    </recommendedName>
    <alternativeName>
        <fullName>36 kDa FK506-binding protein</fullName>
    </alternativeName>
    <alternativeName>
        <fullName>FK506-binding protein 6</fullName>
    </alternativeName>
    <alternativeName>
        <fullName>Immunophilin FKBP36</fullName>
    </alternativeName>
</protein>
<accession>D3ZQF4</accession>
<sequence>MSVFSRLRNGIPPSRDDCQSPYERLSQRMLDISGDRGVLKDIIREGAGDPVTPDASVLVKYSGYLEHMDKPFDSNCFRKTPRLMKLGEDITLWGMELGLLSMRRGELARFLFKPTYAYGTLGCPPLIPPNATVLFEIELIDFLDSAESDKFCALSAEQQEQFPLQKVLKVAATEREFGNYLFRQNRFCDAKVRYKRALLLLHRRLAICEEQHLVEPAELLVLLNLSFVYLKLDRPAMALRYGEQALLIDKRNAKALFRCGQACLLLTEYEQARDFLVRAQKEQPCNHDINNELKKLSSHYRDYVDREREMCHRMFAPCGSGSSVGGN</sequence>
<keyword id="KW-0158">Chromosome</keyword>
<keyword id="KW-0963">Cytoplasm</keyword>
<keyword id="KW-0221">Differentiation</keyword>
<keyword id="KW-0469">Meiosis</keyword>
<keyword id="KW-0539">Nucleus</keyword>
<keyword id="KW-1185">Reference proteome</keyword>
<keyword id="KW-0677">Repeat</keyword>
<keyword id="KW-0943">RNA-mediated gene silencing</keyword>
<keyword id="KW-0744">Spermatogenesis</keyword>
<keyword id="KW-0802">TPR repeat</keyword>
<reference key="1">
    <citation type="journal article" date="2004" name="Nature">
        <title>Genome sequence of the Brown Norway rat yields insights into mammalian evolution.</title>
        <authorList>
            <person name="Gibbs R.A."/>
            <person name="Weinstock G.M."/>
            <person name="Metzker M.L."/>
            <person name="Muzny D.M."/>
            <person name="Sodergren E.J."/>
            <person name="Scherer S."/>
            <person name="Scott G."/>
            <person name="Steffen D."/>
            <person name="Worley K.C."/>
            <person name="Burch P.E."/>
            <person name="Okwuonu G."/>
            <person name="Hines S."/>
            <person name="Lewis L."/>
            <person name="Deramo C."/>
            <person name="Delgado O."/>
            <person name="Dugan-Rocha S."/>
            <person name="Miner G."/>
            <person name="Morgan M."/>
            <person name="Hawes A."/>
            <person name="Gill R."/>
            <person name="Holt R.A."/>
            <person name="Adams M.D."/>
            <person name="Amanatides P.G."/>
            <person name="Baden-Tillson H."/>
            <person name="Barnstead M."/>
            <person name="Chin S."/>
            <person name="Evans C.A."/>
            <person name="Ferriera S."/>
            <person name="Fosler C."/>
            <person name="Glodek A."/>
            <person name="Gu Z."/>
            <person name="Jennings D."/>
            <person name="Kraft C.L."/>
            <person name="Nguyen T."/>
            <person name="Pfannkoch C.M."/>
            <person name="Sitter C."/>
            <person name="Sutton G.G."/>
            <person name="Venter J.C."/>
            <person name="Woodage T."/>
            <person name="Smith D."/>
            <person name="Lee H.-M."/>
            <person name="Gustafson E."/>
            <person name="Cahill P."/>
            <person name="Kana A."/>
            <person name="Doucette-Stamm L."/>
            <person name="Weinstock K."/>
            <person name="Fechtel K."/>
            <person name="Weiss R.B."/>
            <person name="Dunn D.M."/>
            <person name="Green E.D."/>
            <person name="Blakesley R.W."/>
            <person name="Bouffard G.G."/>
            <person name="De Jong P.J."/>
            <person name="Osoegawa K."/>
            <person name="Zhu B."/>
            <person name="Marra M."/>
            <person name="Schein J."/>
            <person name="Bosdet I."/>
            <person name="Fjell C."/>
            <person name="Jones S."/>
            <person name="Krzywinski M."/>
            <person name="Mathewson C."/>
            <person name="Siddiqui A."/>
            <person name="Wye N."/>
            <person name="McPherson J."/>
            <person name="Zhao S."/>
            <person name="Fraser C.M."/>
            <person name="Shetty J."/>
            <person name="Shatsman S."/>
            <person name="Geer K."/>
            <person name="Chen Y."/>
            <person name="Abramzon S."/>
            <person name="Nierman W.C."/>
            <person name="Havlak P.H."/>
            <person name="Chen R."/>
            <person name="Durbin K.J."/>
            <person name="Egan A."/>
            <person name="Ren Y."/>
            <person name="Song X.-Z."/>
            <person name="Li B."/>
            <person name="Liu Y."/>
            <person name="Qin X."/>
            <person name="Cawley S."/>
            <person name="Cooney A.J."/>
            <person name="D'Souza L.M."/>
            <person name="Martin K."/>
            <person name="Wu J.Q."/>
            <person name="Gonzalez-Garay M.L."/>
            <person name="Jackson A.R."/>
            <person name="Kalafus K.J."/>
            <person name="McLeod M.P."/>
            <person name="Milosavljevic A."/>
            <person name="Virk D."/>
            <person name="Volkov A."/>
            <person name="Wheeler D.A."/>
            <person name="Zhang Z."/>
            <person name="Bailey J.A."/>
            <person name="Eichler E.E."/>
            <person name="Tuzun E."/>
            <person name="Birney E."/>
            <person name="Mongin E."/>
            <person name="Ureta-Vidal A."/>
            <person name="Woodwark C."/>
            <person name="Zdobnov E."/>
            <person name="Bork P."/>
            <person name="Suyama M."/>
            <person name="Torrents D."/>
            <person name="Alexandersson M."/>
            <person name="Trask B.J."/>
            <person name="Young J.M."/>
            <person name="Huang H."/>
            <person name="Wang H."/>
            <person name="Xing H."/>
            <person name="Daniels S."/>
            <person name="Gietzen D."/>
            <person name="Schmidt J."/>
            <person name="Stevens K."/>
            <person name="Vitt U."/>
            <person name="Wingrove J."/>
            <person name="Camara F."/>
            <person name="Mar Alba M."/>
            <person name="Abril J.F."/>
            <person name="Guigo R."/>
            <person name="Smit A."/>
            <person name="Dubchak I."/>
            <person name="Rubin E.M."/>
            <person name="Couronne O."/>
            <person name="Poliakov A."/>
            <person name="Huebner N."/>
            <person name="Ganten D."/>
            <person name="Goesele C."/>
            <person name="Hummel O."/>
            <person name="Kreitler T."/>
            <person name="Lee Y.-A."/>
            <person name="Monti J."/>
            <person name="Schulz H."/>
            <person name="Zimdahl H."/>
            <person name="Himmelbauer H."/>
            <person name="Lehrach H."/>
            <person name="Jacob H.J."/>
            <person name="Bromberg S."/>
            <person name="Gullings-Handley J."/>
            <person name="Jensen-Seaman M.I."/>
            <person name="Kwitek A.E."/>
            <person name="Lazar J."/>
            <person name="Pasko D."/>
            <person name="Tonellato P.J."/>
            <person name="Twigger S."/>
            <person name="Ponting C.P."/>
            <person name="Duarte J.M."/>
            <person name="Rice S."/>
            <person name="Goodstadt L."/>
            <person name="Beatson S.A."/>
            <person name="Emes R.D."/>
            <person name="Winter E.E."/>
            <person name="Webber C."/>
            <person name="Brandt P."/>
            <person name="Nyakatura G."/>
            <person name="Adetobi M."/>
            <person name="Chiaromonte F."/>
            <person name="Elnitski L."/>
            <person name="Eswara P."/>
            <person name="Hardison R.C."/>
            <person name="Hou M."/>
            <person name="Kolbe D."/>
            <person name="Makova K."/>
            <person name="Miller W."/>
            <person name="Nekrutenko A."/>
            <person name="Riemer C."/>
            <person name="Schwartz S."/>
            <person name="Taylor J."/>
            <person name="Yang S."/>
            <person name="Zhang Y."/>
            <person name="Lindpaintner K."/>
            <person name="Andrews T.D."/>
            <person name="Caccamo M."/>
            <person name="Clamp M."/>
            <person name="Clarke L."/>
            <person name="Curwen V."/>
            <person name="Durbin R.M."/>
            <person name="Eyras E."/>
            <person name="Searle S.M."/>
            <person name="Cooper G.M."/>
            <person name="Batzoglou S."/>
            <person name="Brudno M."/>
            <person name="Sidow A."/>
            <person name="Stone E.A."/>
            <person name="Payseur B.A."/>
            <person name="Bourque G."/>
            <person name="Lopez-Otin C."/>
            <person name="Puente X.S."/>
            <person name="Chakrabarti K."/>
            <person name="Chatterji S."/>
            <person name="Dewey C."/>
            <person name="Pachter L."/>
            <person name="Bray N."/>
            <person name="Yap V.B."/>
            <person name="Caspi A."/>
            <person name="Tesler G."/>
            <person name="Pevzner P.A."/>
            <person name="Haussler D."/>
            <person name="Roskin K.M."/>
            <person name="Baertsch R."/>
            <person name="Clawson H."/>
            <person name="Furey T.S."/>
            <person name="Hinrichs A.S."/>
            <person name="Karolchik D."/>
            <person name="Kent W.J."/>
            <person name="Rosenbloom K.R."/>
            <person name="Trumbower H."/>
            <person name="Weirauch M."/>
            <person name="Cooper D.N."/>
            <person name="Stenson P.D."/>
            <person name="Ma B."/>
            <person name="Brent M."/>
            <person name="Arumugam M."/>
            <person name="Shteynberg D."/>
            <person name="Copley R.R."/>
            <person name="Taylor M.S."/>
            <person name="Riethman H."/>
            <person name="Mudunuri U."/>
            <person name="Peterson J."/>
            <person name="Guyer M."/>
            <person name="Felsenfeld A."/>
            <person name="Old S."/>
            <person name="Mockrin S."/>
            <person name="Collins F.S."/>
        </authorList>
    </citation>
    <scope>NUCLEOTIDE SEQUENCE [LARGE SCALE GENOMIC DNA]</scope>
    <source>
        <strain>Brown Norway</strain>
    </source>
</reference>
<reference key="2">
    <citation type="submission" date="2005-07" db="EMBL/GenBank/DDBJ databases">
        <authorList>
            <person name="Mural R.J."/>
            <person name="Adams M.D."/>
            <person name="Myers E.W."/>
            <person name="Smith H.O."/>
            <person name="Venter J.C."/>
        </authorList>
    </citation>
    <scope>NUCLEOTIDE SEQUENCE [LARGE SCALE GENOMIC DNA]</scope>
    <source>
        <strain>Brown Norway</strain>
    </source>
</reference>
<reference key="3">
    <citation type="journal article" date="2003" name="Science">
        <title>Essential role of Fkbp6 in male fertility and homologous chromosome pairing in meiosis.</title>
        <authorList>
            <person name="Crackower M.A."/>
            <person name="Kolas N.K."/>
            <person name="Noguchi J."/>
            <person name="Sarao R."/>
            <person name="Kikuchi K."/>
            <person name="Kaneko H."/>
            <person name="Kobayashi E."/>
            <person name="Kawai Y."/>
            <person name="Kozieradzki I."/>
            <person name="Landers R."/>
            <person name="Mo R."/>
            <person name="Hui C.C."/>
            <person name="Nieves E."/>
            <person name="Cohen P.E."/>
            <person name="Osborne L.R."/>
            <person name="Wada T."/>
            <person name="Kunieda T."/>
            <person name="Moens P.B."/>
            <person name="Penninger J.M."/>
        </authorList>
    </citation>
    <scope>DISEASE</scope>
</reference>
<dbReference type="EMBL" id="AABR06071167">
    <property type="status" value="NOT_ANNOTATED_CDS"/>
    <property type="molecule type" value="Genomic_DNA"/>
</dbReference>
<dbReference type="EMBL" id="CH473973">
    <property type="protein sequence ID" value="EDM13376.1"/>
    <property type="molecule type" value="Genomic_DNA"/>
</dbReference>
<dbReference type="EMBL" id="CH473973">
    <property type="protein sequence ID" value="EDM13377.1"/>
    <property type="molecule type" value="Genomic_DNA"/>
</dbReference>
<dbReference type="RefSeq" id="NP_001099392.1">
    <property type="nucleotide sequence ID" value="NM_001105922.1"/>
</dbReference>
<dbReference type="RefSeq" id="XP_008767352.1">
    <property type="nucleotide sequence ID" value="XM_008769130.4"/>
</dbReference>
<dbReference type="RefSeq" id="XP_017453788.1">
    <property type="nucleotide sequence ID" value="XM_017598299.3"/>
</dbReference>
<dbReference type="SMR" id="D3ZQF4"/>
<dbReference type="FunCoup" id="D3ZQF4">
    <property type="interactions" value="21"/>
</dbReference>
<dbReference type="STRING" id="10116.ENSRNOP00000001971"/>
<dbReference type="PhosphoSitePlus" id="D3ZQF4"/>
<dbReference type="PaxDb" id="10116-ENSRNOP00000001971"/>
<dbReference type="Ensembl" id="ENSRNOT00000001971.5">
    <property type="protein sequence ID" value="ENSRNOP00000001971.2"/>
    <property type="gene ID" value="ENSRNOG00000001451.7"/>
</dbReference>
<dbReference type="GeneID" id="288597"/>
<dbReference type="KEGG" id="rno:288597"/>
<dbReference type="UCSC" id="RGD:1308926">
    <property type="organism name" value="rat"/>
</dbReference>
<dbReference type="AGR" id="RGD:1308926"/>
<dbReference type="CTD" id="8468"/>
<dbReference type="RGD" id="1308926">
    <property type="gene designation" value="Fkbp6"/>
</dbReference>
<dbReference type="eggNOG" id="KOG0543">
    <property type="taxonomic scope" value="Eukaryota"/>
</dbReference>
<dbReference type="GeneTree" id="ENSGT00940000158514"/>
<dbReference type="HOGENOM" id="CLU_013615_13_2_1"/>
<dbReference type="InParanoid" id="D3ZQF4"/>
<dbReference type="OrthoDB" id="8116123at2759"/>
<dbReference type="PhylomeDB" id="D3ZQF4"/>
<dbReference type="TreeFam" id="TF354214"/>
<dbReference type="PRO" id="PR:D3ZQF4"/>
<dbReference type="Proteomes" id="UP000002494">
    <property type="component" value="Chromosome 12"/>
</dbReference>
<dbReference type="Proteomes" id="UP000234681">
    <property type="component" value="Chromosome 12"/>
</dbReference>
<dbReference type="Bgee" id="ENSRNOG00000001451">
    <property type="expression patterns" value="Expressed in testis and 2 other cell types or tissues"/>
</dbReference>
<dbReference type="GO" id="GO:0005737">
    <property type="term" value="C:cytoplasm"/>
    <property type="evidence" value="ECO:0000250"/>
    <property type="project" value="UniProtKB"/>
</dbReference>
<dbReference type="GO" id="GO:0005829">
    <property type="term" value="C:cytosol"/>
    <property type="evidence" value="ECO:0000250"/>
    <property type="project" value="UniProtKB"/>
</dbReference>
<dbReference type="GO" id="GO:0000795">
    <property type="term" value="C:synaptonemal complex"/>
    <property type="evidence" value="ECO:0000250"/>
    <property type="project" value="UniProtKB"/>
</dbReference>
<dbReference type="GO" id="GO:0051879">
    <property type="term" value="F:Hsp90 protein binding"/>
    <property type="evidence" value="ECO:0000250"/>
    <property type="project" value="UniProtKB"/>
</dbReference>
<dbReference type="GO" id="GO:0042802">
    <property type="term" value="F:identical protein binding"/>
    <property type="evidence" value="ECO:0000266"/>
    <property type="project" value="RGD"/>
</dbReference>
<dbReference type="GO" id="GO:0030154">
    <property type="term" value="P:cell differentiation"/>
    <property type="evidence" value="ECO:0007669"/>
    <property type="project" value="UniProtKB-KW"/>
</dbReference>
<dbReference type="GO" id="GO:0051321">
    <property type="term" value="P:meiotic cell cycle"/>
    <property type="evidence" value="ECO:0000250"/>
    <property type="project" value="UniProtKB"/>
</dbReference>
<dbReference type="GO" id="GO:0034587">
    <property type="term" value="P:piRNA processing"/>
    <property type="evidence" value="ECO:0000250"/>
    <property type="project" value="UniProtKB"/>
</dbReference>
<dbReference type="GO" id="GO:0045070">
    <property type="term" value="P:positive regulation of viral genome replication"/>
    <property type="evidence" value="ECO:0000266"/>
    <property type="project" value="RGD"/>
</dbReference>
<dbReference type="GO" id="GO:0006457">
    <property type="term" value="P:protein folding"/>
    <property type="evidence" value="ECO:0000250"/>
    <property type="project" value="UniProtKB"/>
</dbReference>
<dbReference type="GO" id="GO:0031047">
    <property type="term" value="P:regulatory ncRNA-mediated gene silencing"/>
    <property type="evidence" value="ECO:0000250"/>
    <property type="project" value="UniProtKB"/>
</dbReference>
<dbReference type="GO" id="GO:0007283">
    <property type="term" value="P:spermatogenesis"/>
    <property type="evidence" value="ECO:0000315"/>
    <property type="project" value="RGD"/>
</dbReference>
<dbReference type="GO" id="GO:0141196">
    <property type="term" value="P:transposable element silencing by piRNA-mediated DNA methylation"/>
    <property type="evidence" value="ECO:0000250"/>
    <property type="project" value="UniProtKB"/>
</dbReference>
<dbReference type="FunFam" id="1.25.40.10:FF:000160">
    <property type="entry name" value="Peptidylprolyl isomerase"/>
    <property type="match status" value="1"/>
</dbReference>
<dbReference type="FunFam" id="3.10.50.40:FF:000030">
    <property type="entry name" value="Peptidylprolyl isomerase"/>
    <property type="match status" value="1"/>
</dbReference>
<dbReference type="Gene3D" id="3.10.50.40">
    <property type="match status" value="1"/>
</dbReference>
<dbReference type="Gene3D" id="1.25.40.10">
    <property type="entry name" value="Tetratricopeptide repeat domain"/>
    <property type="match status" value="1"/>
</dbReference>
<dbReference type="InterPro" id="IPR042282">
    <property type="entry name" value="FKBP6/shu"/>
</dbReference>
<dbReference type="InterPro" id="IPR046357">
    <property type="entry name" value="PPIase_dom_sf"/>
</dbReference>
<dbReference type="InterPro" id="IPR001179">
    <property type="entry name" value="PPIase_FKBP_dom"/>
</dbReference>
<dbReference type="InterPro" id="IPR011990">
    <property type="entry name" value="TPR-like_helical_dom_sf"/>
</dbReference>
<dbReference type="InterPro" id="IPR019734">
    <property type="entry name" value="TPR_rpt"/>
</dbReference>
<dbReference type="PANTHER" id="PTHR46674">
    <property type="entry name" value="INACTIVE PEPTIDYL-PROLYL CIS-TRANS ISOMERASE FKBP6"/>
    <property type="match status" value="1"/>
</dbReference>
<dbReference type="PANTHER" id="PTHR46674:SF1">
    <property type="entry name" value="INACTIVE PEPTIDYL-PROLYL CIS-TRANS ISOMERASE FKBP6"/>
    <property type="match status" value="1"/>
</dbReference>
<dbReference type="Pfam" id="PF00254">
    <property type="entry name" value="FKBP_C"/>
    <property type="match status" value="1"/>
</dbReference>
<dbReference type="SMART" id="SM00028">
    <property type="entry name" value="TPR"/>
    <property type="match status" value="3"/>
</dbReference>
<dbReference type="SUPFAM" id="SSF54534">
    <property type="entry name" value="FKBP-like"/>
    <property type="match status" value="1"/>
</dbReference>
<dbReference type="SUPFAM" id="SSF48452">
    <property type="entry name" value="TPR-like"/>
    <property type="match status" value="1"/>
</dbReference>
<dbReference type="PROSITE" id="PS50059">
    <property type="entry name" value="FKBP_PPIASE"/>
    <property type="match status" value="1"/>
</dbReference>
<dbReference type="PROSITE" id="PS50293">
    <property type="entry name" value="TPR_REGION"/>
    <property type="match status" value="1"/>
</dbReference>
<feature type="chain" id="PRO_0000428726" description="Inactive peptidyl-prolyl cis-trans isomerase FKBP6">
    <location>
        <begin position="1"/>
        <end position="327"/>
    </location>
</feature>
<feature type="domain" description="PPIase FKBP-type" evidence="2">
    <location>
        <begin position="54"/>
        <end position="143"/>
    </location>
</feature>
<feature type="repeat" description="TPR 1">
    <location>
        <begin position="171"/>
        <end position="204"/>
    </location>
</feature>
<feature type="repeat" description="TPR 2">
    <location>
        <begin position="219"/>
        <end position="252"/>
    </location>
</feature>
<feature type="repeat" description="TPR 3">
    <location>
        <begin position="253"/>
        <end position="286"/>
    </location>
</feature>
<feature type="region of interest" description="Disordered" evidence="3">
    <location>
        <begin position="1"/>
        <end position="20"/>
    </location>
</feature>
<gene>
    <name type="primary">Fkbp6</name>
    <name type="synonym">As</name>
    <name type="synonym">Fkbp36</name>
</gene>
<comment type="function">
    <text evidence="1">Co-chaperone required during spermatogenesis to repress transposable elements and prevent their mobilization, which is essential for the germline integrity. Acts via the piRNA metabolic process, which mediates the repression of transposable elements during meiosis by forming complexes composed of piRNAs and Piwi proteins and govern the methylation and subsequent repression of transposons. Acts as a co-chaperone via its interaction with HSP90 and is required for the piRNA amplification process, the secondary piRNA biogenesis. May be required together with HSP90 in removal of 16 nucleotide ping-pong by-products from Piwi complexes, possibly facilitating turnover of Piwi complexes (By similarity).</text>
</comment>
<comment type="subunit">
    <text evidence="1">Interacts with HSP72/HSPA2 and CLTC. Interacts with GAPDH; leading to inhibit GAPDH catalytic activity. Interacts (via TPR repeats) with HSP90 (By similarity).</text>
</comment>
<comment type="subcellular location">
    <subcellularLocation>
        <location evidence="1">Cytoplasm</location>
        <location evidence="1">Cytosol</location>
    </subcellularLocation>
    <subcellularLocation>
        <location evidence="1">Nucleus</location>
    </subcellularLocation>
    <subcellularLocation>
        <location evidence="1">Chromosome</location>
    </subcellularLocation>
    <text evidence="1">Does not localize to pi-bodies. Localizes to meiotic chromosome cores and regions of homologous chromosome synapsis (By similarity).</text>
</comment>
<comment type="disease">
    <text evidence="4">Defects in Fkbp6 are the cause of spontaneous male sterile mutant 'As'. Males are sterile and aspermic due to abnormal pairing and misalignments between homologous chromosomes, non-homologous partner switches, and autosynapsis of X chromosome cores in meiotic spermatocytes (PubMed:12764197).</text>
</comment>
<comment type="similarity">
    <text evidence="5">Belongs to the FKBP6 family.</text>
</comment>
<comment type="caution">
    <text evidence="5">Although it contains a PPIase FKBP-type domain, does not show peptidyl-prolyl cis-trans isomerase activity.</text>
</comment>